<accession>Q8HVM5</accession>
<evidence type="ECO:0000255" key="1">
    <source>
        <dbReference type="HAMAP-Rule" id="MF_01351"/>
    </source>
</evidence>
<gene>
    <name evidence="1" type="primary">ndhI</name>
</gene>
<reference key="1">
    <citation type="submission" date="2003-01" db="EMBL/GenBank/DDBJ databases">
        <title>Chloroplast DNA phylogeny of tribe Heliantheae (Asteraceae).</title>
        <authorList>
            <person name="Panero J.L."/>
            <person name="Baldwin B.G."/>
            <person name="Schilling E.E."/>
            <person name="Clevinger J.A."/>
        </authorList>
    </citation>
    <scope>NUCLEOTIDE SEQUENCE [GENOMIC DNA]</scope>
</reference>
<feature type="chain" id="PRO_0000250836" description="NAD(P)H-quinone oxidoreductase subunit I, chloroplastic">
    <location>
        <begin position="1"/>
        <end position="166"/>
    </location>
</feature>
<feature type="domain" description="4Fe-4S ferredoxin-type 1" evidence="1">
    <location>
        <begin position="55"/>
        <end position="84"/>
    </location>
</feature>
<feature type="domain" description="4Fe-4S ferredoxin-type 2" evidence="1">
    <location>
        <begin position="95"/>
        <end position="124"/>
    </location>
</feature>
<feature type="binding site" evidence="1">
    <location>
        <position position="64"/>
    </location>
    <ligand>
        <name>[4Fe-4S] cluster</name>
        <dbReference type="ChEBI" id="CHEBI:49883"/>
        <label>1</label>
    </ligand>
</feature>
<feature type="binding site" evidence="1">
    <location>
        <position position="67"/>
    </location>
    <ligand>
        <name>[4Fe-4S] cluster</name>
        <dbReference type="ChEBI" id="CHEBI:49883"/>
        <label>1</label>
    </ligand>
</feature>
<feature type="binding site" evidence="1">
    <location>
        <position position="70"/>
    </location>
    <ligand>
        <name>[4Fe-4S] cluster</name>
        <dbReference type="ChEBI" id="CHEBI:49883"/>
        <label>1</label>
    </ligand>
</feature>
<feature type="binding site" evidence="1">
    <location>
        <position position="74"/>
    </location>
    <ligand>
        <name>[4Fe-4S] cluster</name>
        <dbReference type="ChEBI" id="CHEBI:49883"/>
        <label>2</label>
    </ligand>
</feature>
<feature type="binding site" evidence="1">
    <location>
        <position position="104"/>
    </location>
    <ligand>
        <name>[4Fe-4S] cluster</name>
        <dbReference type="ChEBI" id="CHEBI:49883"/>
        <label>2</label>
    </ligand>
</feature>
<feature type="binding site" evidence="1">
    <location>
        <position position="107"/>
    </location>
    <ligand>
        <name>[4Fe-4S] cluster</name>
        <dbReference type="ChEBI" id="CHEBI:49883"/>
        <label>2</label>
    </ligand>
</feature>
<feature type="binding site" evidence="1">
    <location>
        <position position="110"/>
    </location>
    <ligand>
        <name>[4Fe-4S] cluster</name>
        <dbReference type="ChEBI" id="CHEBI:49883"/>
        <label>2</label>
    </ligand>
</feature>
<feature type="binding site" evidence="1">
    <location>
        <position position="114"/>
    </location>
    <ligand>
        <name>[4Fe-4S] cluster</name>
        <dbReference type="ChEBI" id="CHEBI:49883"/>
        <label>1</label>
    </ligand>
</feature>
<geneLocation type="chloroplast"/>
<comment type="function">
    <text evidence="1">NDH shuttles electrons from NAD(P)H:plastoquinone, via FMN and iron-sulfur (Fe-S) centers, to quinones in the photosynthetic chain and possibly in a chloroplast respiratory chain. The immediate electron acceptor for the enzyme in this species is believed to be plastoquinone. Couples the redox reaction to proton translocation, and thus conserves the redox energy in a proton gradient.</text>
</comment>
<comment type="catalytic activity">
    <reaction evidence="1">
        <text>a plastoquinone + NADH + (n+1) H(+)(in) = a plastoquinol + NAD(+) + n H(+)(out)</text>
        <dbReference type="Rhea" id="RHEA:42608"/>
        <dbReference type="Rhea" id="RHEA-COMP:9561"/>
        <dbReference type="Rhea" id="RHEA-COMP:9562"/>
        <dbReference type="ChEBI" id="CHEBI:15378"/>
        <dbReference type="ChEBI" id="CHEBI:17757"/>
        <dbReference type="ChEBI" id="CHEBI:57540"/>
        <dbReference type="ChEBI" id="CHEBI:57945"/>
        <dbReference type="ChEBI" id="CHEBI:62192"/>
    </reaction>
</comment>
<comment type="catalytic activity">
    <reaction evidence="1">
        <text>a plastoquinone + NADPH + (n+1) H(+)(in) = a plastoquinol + NADP(+) + n H(+)(out)</text>
        <dbReference type="Rhea" id="RHEA:42612"/>
        <dbReference type="Rhea" id="RHEA-COMP:9561"/>
        <dbReference type="Rhea" id="RHEA-COMP:9562"/>
        <dbReference type="ChEBI" id="CHEBI:15378"/>
        <dbReference type="ChEBI" id="CHEBI:17757"/>
        <dbReference type="ChEBI" id="CHEBI:57783"/>
        <dbReference type="ChEBI" id="CHEBI:58349"/>
        <dbReference type="ChEBI" id="CHEBI:62192"/>
    </reaction>
</comment>
<comment type="cofactor">
    <cofactor evidence="1">
        <name>[4Fe-4S] cluster</name>
        <dbReference type="ChEBI" id="CHEBI:49883"/>
    </cofactor>
    <text evidence="1">Binds 2 [4Fe-4S] clusters per subunit.</text>
</comment>
<comment type="subunit">
    <text evidence="1">NDH is composed of at least 16 different subunits, 5 of which are encoded in the nucleus.</text>
</comment>
<comment type="subcellular location">
    <subcellularLocation>
        <location evidence="1">Plastid</location>
        <location evidence="1">Chloroplast thylakoid membrane</location>
        <topology evidence="1">Peripheral membrane protein</topology>
    </subcellularLocation>
</comment>
<comment type="similarity">
    <text evidence="1">Belongs to the complex I 23 kDa subunit family.</text>
</comment>
<protein>
    <recommendedName>
        <fullName evidence="1">NAD(P)H-quinone oxidoreductase subunit I, chloroplastic</fullName>
        <ecNumber evidence="1">7.1.1.-</ecNumber>
    </recommendedName>
    <alternativeName>
        <fullName evidence="1">NAD(P)H dehydrogenase subunit I</fullName>
        <shortName evidence="1">NDH subunit I</shortName>
    </alternativeName>
    <alternativeName>
        <fullName evidence="1">NADH-plastoquinone oxidoreductase subunit I</fullName>
    </alternativeName>
</protein>
<keyword id="KW-0004">4Fe-4S</keyword>
<keyword id="KW-0150">Chloroplast</keyword>
<keyword id="KW-0408">Iron</keyword>
<keyword id="KW-0411">Iron-sulfur</keyword>
<keyword id="KW-0472">Membrane</keyword>
<keyword id="KW-0479">Metal-binding</keyword>
<keyword id="KW-0520">NAD</keyword>
<keyword id="KW-0521">NADP</keyword>
<keyword id="KW-0934">Plastid</keyword>
<keyword id="KW-0618">Plastoquinone</keyword>
<keyword id="KW-0874">Quinone</keyword>
<keyword id="KW-0677">Repeat</keyword>
<keyword id="KW-0793">Thylakoid</keyword>
<keyword id="KW-1278">Translocase</keyword>
<dbReference type="EC" id="7.1.1.-" evidence="1"/>
<dbReference type="EMBL" id="AF383838">
    <property type="protein sequence ID" value="AAN61779.1"/>
    <property type="molecule type" value="Genomic_DNA"/>
</dbReference>
<dbReference type="SMR" id="Q8HVM5"/>
<dbReference type="GO" id="GO:0009535">
    <property type="term" value="C:chloroplast thylakoid membrane"/>
    <property type="evidence" value="ECO:0007669"/>
    <property type="project" value="UniProtKB-SubCell"/>
</dbReference>
<dbReference type="GO" id="GO:0051539">
    <property type="term" value="F:4 iron, 4 sulfur cluster binding"/>
    <property type="evidence" value="ECO:0007669"/>
    <property type="project" value="UniProtKB-KW"/>
</dbReference>
<dbReference type="GO" id="GO:0005506">
    <property type="term" value="F:iron ion binding"/>
    <property type="evidence" value="ECO:0007669"/>
    <property type="project" value="UniProtKB-UniRule"/>
</dbReference>
<dbReference type="GO" id="GO:0008137">
    <property type="term" value="F:NADH dehydrogenase (ubiquinone) activity"/>
    <property type="evidence" value="ECO:0007669"/>
    <property type="project" value="InterPro"/>
</dbReference>
<dbReference type="GO" id="GO:0048038">
    <property type="term" value="F:quinone binding"/>
    <property type="evidence" value="ECO:0007669"/>
    <property type="project" value="UniProtKB-KW"/>
</dbReference>
<dbReference type="GO" id="GO:0019684">
    <property type="term" value="P:photosynthesis, light reaction"/>
    <property type="evidence" value="ECO:0007669"/>
    <property type="project" value="UniProtKB-UniRule"/>
</dbReference>
<dbReference type="FunFam" id="3.30.70.3270:FF:000006">
    <property type="entry name" value="NAD(P)H-quinone oxidoreductase subunit I, chloroplastic"/>
    <property type="match status" value="1"/>
</dbReference>
<dbReference type="Gene3D" id="3.30.70.3270">
    <property type="match status" value="1"/>
</dbReference>
<dbReference type="HAMAP" id="MF_01351">
    <property type="entry name" value="NDH1_NuoI"/>
    <property type="match status" value="1"/>
</dbReference>
<dbReference type="InterPro" id="IPR017896">
    <property type="entry name" value="4Fe4S_Fe-S-bd"/>
</dbReference>
<dbReference type="InterPro" id="IPR017900">
    <property type="entry name" value="4Fe4S_Fe_S_CS"/>
</dbReference>
<dbReference type="InterPro" id="IPR010226">
    <property type="entry name" value="NADH_quinone_OxRdtase_chainI"/>
</dbReference>
<dbReference type="InterPro" id="IPR004497">
    <property type="entry name" value="NDHI"/>
</dbReference>
<dbReference type="NCBIfam" id="TIGR00403">
    <property type="entry name" value="ndhI"/>
    <property type="match status" value="1"/>
</dbReference>
<dbReference type="NCBIfam" id="TIGR01971">
    <property type="entry name" value="NuoI"/>
    <property type="match status" value="1"/>
</dbReference>
<dbReference type="NCBIfam" id="NF004537">
    <property type="entry name" value="PRK05888.1-3"/>
    <property type="match status" value="1"/>
</dbReference>
<dbReference type="PANTHER" id="PTHR47275">
    <property type="entry name" value="NAD(P)H-QUINONE OXIDOREDUCTASE SUBUNIT I, CHLOROPLASTIC"/>
    <property type="match status" value="1"/>
</dbReference>
<dbReference type="PANTHER" id="PTHR47275:SF1">
    <property type="entry name" value="NAD(P)H-QUINONE OXIDOREDUCTASE SUBUNIT I, CHLOROPLASTIC"/>
    <property type="match status" value="1"/>
</dbReference>
<dbReference type="Pfam" id="PF00037">
    <property type="entry name" value="Fer4"/>
    <property type="match status" value="2"/>
</dbReference>
<dbReference type="SUPFAM" id="SSF54862">
    <property type="entry name" value="4Fe-4S ferredoxins"/>
    <property type="match status" value="1"/>
</dbReference>
<dbReference type="PROSITE" id="PS00198">
    <property type="entry name" value="4FE4S_FER_1"/>
    <property type="match status" value="2"/>
</dbReference>
<dbReference type="PROSITE" id="PS51379">
    <property type="entry name" value="4FE4S_FER_2"/>
    <property type="match status" value="2"/>
</dbReference>
<sequence length="166" mass="19495">MFPMVTEFMNYGQQTVRAARYIGQGFMITLSHANRLPVTIQYPYEKLITSERFRGRIHFEFDKCIACEVCVRVCPIDLPVVDWKLETDIRKKRLLNYSIDFGICIFCGNCVEYCPTNCLSMTEEYELSTYDRHELNYNQIALGRLPMSIIDDYTIRTIFNLPEIKS</sequence>
<proteinExistence type="inferred from homology"/>
<name>NDHI_POLCN</name>
<organism>
    <name type="scientific">Polymnia canadensis</name>
    <name type="common">White-flowered leaf-cup</name>
    <dbReference type="NCBI Taxonomy" id="183070"/>
    <lineage>
        <taxon>Eukaryota</taxon>
        <taxon>Viridiplantae</taxon>
        <taxon>Streptophyta</taxon>
        <taxon>Embryophyta</taxon>
        <taxon>Tracheophyta</taxon>
        <taxon>Spermatophyta</taxon>
        <taxon>Magnoliopsida</taxon>
        <taxon>eudicotyledons</taxon>
        <taxon>Gunneridae</taxon>
        <taxon>Pentapetalae</taxon>
        <taxon>asterids</taxon>
        <taxon>campanulids</taxon>
        <taxon>Asterales</taxon>
        <taxon>Asteraceae</taxon>
        <taxon>Asteroideae</taxon>
        <taxon>Heliantheae alliance</taxon>
        <taxon>Polymnieae</taxon>
        <taxon>Polymnia</taxon>
    </lineage>
</organism>